<accession>Q8NH00</accession>
<accession>Q6IEZ8</accession>
<gene>
    <name type="primary">OR2T4</name>
</gene>
<comment type="function">
    <text evidence="3">Odorant receptor.</text>
</comment>
<comment type="subcellular location">
    <subcellularLocation>
        <location>Cell membrane</location>
        <topology>Multi-pass membrane protein</topology>
    </subcellularLocation>
</comment>
<comment type="similarity">
    <text evidence="2">Belongs to the G-protein coupled receptor 1 family.</text>
</comment>
<comment type="caution">
    <text evidence="3">It is uncertain whether Met-1 or Met-29 is the initiator.</text>
</comment>
<comment type="sequence caution" evidence="3">
    <conflict type="erroneous initiation">
        <sequence resource="EMBL-CDS" id="BAC05842"/>
    </conflict>
</comment>
<comment type="online information" name="Human Olfactory Receptor Data Exploratorium (HORDE)">
    <link uri="http://genome.weizmann.ac.il/horde/card/index/symbol:OR2T4"/>
</comment>
<dbReference type="EMBL" id="AB065615">
    <property type="protein sequence ID" value="BAC05842.1"/>
    <property type="status" value="ALT_INIT"/>
    <property type="molecule type" value="Genomic_DNA"/>
</dbReference>
<dbReference type="EMBL" id="AC138089">
    <property type="status" value="NOT_ANNOTATED_CDS"/>
    <property type="molecule type" value="Genomic_DNA"/>
</dbReference>
<dbReference type="EMBL" id="BK004464">
    <property type="protein sequence ID" value="DAA04862.1"/>
    <property type="molecule type" value="Genomic_DNA"/>
</dbReference>
<dbReference type="RefSeq" id="NP_001004696.1">
    <property type="nucleotide sequence ID" value="NM_001004696.1"/>
</dbReference>
<dbReference type="SMR" id="Q8NH00"/>
<dbReference type="FunCoup" id="Q8NH00">
    <property type="interactions" value="440"/>
</dbReference>
<dbReference type="STRING" id="9606.ENSP00000355431"/>
<dbReference type="GlyCosmos" id="Q8NH00">
    <property type="glycosylation" value="3 sites, No reported glycans"/>
</dbReference>
<dbReference type="GlyGen" id="Q8NH00">
    <property type="glycosylation" value="3 sites"/>
</dbReference>
<dbReference type="iPTMnet" id="Q8NH00"/>
<dbReference type="PhosphoSitePlus" id="Q8NH00"/>
<dbReference type="BioMuta" id="OR2T4"/>
<dbReference type="DMDM" id="229462930"/>
<dbReference type="MassIVE" id="Q8NH00"/>
<dbReference type="PaxDb" id="9606-ENSP00000355431"/>
<dbReference type="PeptideAtlas" id="Q8NH00"/>
<dbReference type="Antibodypedia" id="64191">
    <property type="antibodies" value="14 antibodies from 11 providers"/>
</dbReference>
<dbReference type="DNASU" id="127074"/>
<dbReference type="Ensembl" id="ENST00000621754.1">
    <property type="protein sequence ID" value="ENSP00000478105.1"/>
    <property type="gene ID" value="ENSG00000274870.1"/>
</dbReference>
<dbReference type="Ensembl" id="ENST00000622637.1">
    <property type="protein sequence ID" value="ENSP00000484014.1"/>
    <property type="gene ID" value="ENSG00000275617.1"/>
</dbReference>
<dbReference type="GeneID" id="127074"/>
<dbReference type="KEGG" id="hsa:127074"/>
<dbReference type="UCSC" id="uc001ieh.1">
    <property type="organism name" value="human"/>
</dbReference>
<dbReference type="AGR" id="HGNC:15016"/>
<dbReference type="CTD" id="127074"/>
<dbReference type="DisGeNET" id="127074"/>
<dbReference type="GeneCards" id="OR2T4"/>
<dbReference type="HGNC" id="HGNC:15016">
    <property type="gene designation" value="OR2T4"/>
</dbReference>
<dbReference type="neXtProt" id="NX_Q8NH00"/>
<dbReference type="PharmGKB" id="PA134876557"/>
<dbReference type="VEuPathDB" id="HostDB:ENSG00000196944"/>
<dbReference type="eggNOG" id="ENOG502T92P">
    <property type="taxonomic scope" value="Eukaryota"/>
</dbReference>
<dbReference type="HOGENOM" id="CLU_012526_1_2_1"/>
<dbReference type="InParanoid" id="Q8NH00"/>
<dbReference type="OrthoDB" id="9898717at2759"/>
<dbReference type="PAN-GO" id="Q8NH00">
    <property type="GO annotations" value="0 GO annotations based on evolutionary models"/>
</dbReference>
<dbReference type="PhylomeDB" id="Q8NH00"/>
<dbReference type="TreeFam" id="TF337295"/>
<dbReference type="PathwayCommons" id="Q8NH00"/>
<dbReference type="Reactome" id="R-HSA-381753">
    <property type="pathway name" value="Olfactory Signaling Pathway"/>
</dbReference>
<dbReference type="Reactome" id="R-HSA-9752946">
    <property type="pathway name" value="Expression and translocation of olfactory receptors"/>
</dbReference>
<dbReference type="BioGRID-ORCS" id="127074">
    <property type="hits" value="74 hits in 755 CRISPR screens"/>
</dbReference>
<dbReference type="GeneWiki" id="OR2T4"/>
<dbReference type="GenomeRNAi" id="127074"/>
<dbReference type="Pharos" id="Q8NH00">
    <property type="development level" value="Tdark"/>
</dbReference>
<dbReference type="PRO" id="PR:Q8NH00"/>
<dbReference type="Proteomes" id="UP000005640">
    <property type="component" value="Unplaced"/>
</dbReference>
<dbReference type="RNAct" id="Q8NH00">
    <property type="molecule type" value="protein"/>
</dbReference>
<dbReference type="GO" id="GO:0005886">
    <property type="term" value="C:plasma membrane"/>
    <property type="evidence" value="ECO:0000318"/>
    <property type="project" value="GO_Central"/>
</dbReference>
<dbReference type="GO" id="GO:0004930">
    <property type="term" value="F:G protein-coupled receptor activity"/>
    <property type="evidence" value="ECO:0007669"/>
    <property type="project" value="UniProtKB-KW"/>
</dbReference>
<dbReference type="GO" id="GO:0004984">
    <property type="term" value="F:olfactory receptor activity"/>
    <property type="evidence" value="ECO:0000318"/>
    <property type="project" value="GO_Central"/>
</dbReference>
<dbReference type="GO" id="GO:0050911">
    <property type="term" value="P:detection of chemical stimulus involved in sensory perception of smell"/>
    <property type="evidence" value="ECO:0000318"/>
    <property type="project" value="GO_Central"/>
</dbReference>
<dbReference type="CDD" id="cd15421">
    <property type="entry name" value="7tmA_OR2T-like"/>
    <property type="match status" value="1"/>
</dbReference>
<dbReference type="FunFam" id="1.20.1070.10:FF:000008">
    <property type="entry name" value="Olfactory receptor"/>
    <property type="match status" value="1"/>
</dbReference>
<dbReference type="Gene3D" id="1.20.1070.10">
    <property type="entry name" value="Rhodopsin 7-helix transmembrane proteins"/>
    <property type="match status" value="1"/>
</dbReference>
<dbReference type="InterPro" id="IPR000276">
    <property type="entry name" value="GPCR_Rhodpsn"/>
</dbReference>
<dbReference type="InterPro" id="IPR017452">
    <property type="entry name" value="GPCR_Rhodpsn_7TM"/>
</dbReference>
<dbReference type="InterPro" id="IPR000725">
    <property type="entry name" value="Olfact_rcpt"/>
</dbReference>
<dbReference type="PANTHER" id="PTHR26453">
    <property type="entry name" value="OLFACTORY RECEPTOR"/>
    <property type="match status" value="1"/>
</dbReference>
<dbReference type="Pfam" id="PF13853">
    <property type="entry name" value="7tm_4"/>
    <property type="match status" value="1"/>
</dbReference>
<dbReference type="PRINTS" id="PR00237">
    <property type="entry name" value="GPCRRHODOPSN"/>
</dbReference>
<dbReference type="PRINTS" id="PR00245">
    <property type="entry name" value="OLFACTORYR"/>
</dbReference>
<dbReference type="SUPFAM" id="SSF81321">
    <property type="entry name" value="Family A G protein-coupled receptor-like"/>
    <property type="match status" value="1"/>
</dbReference>
<dbReference type="PROSITE" id="PS00237">
    <property type="entry name" value="G_PROTEIN_RECEP_F1_1"/>
    <property type="match status" value="1"/>
</dbReference>
<dbReference type="PROSITE" id="PS50262">
    <property type="entry name" value="G_PROTEIN_RECEP_F1_2"/>
    <property type="match status" value="1"/>
</dbReference>
<proteinExistence type="inferred from homology"/>
<organism>
    <name type="scientific">Homo sapiens</name>
    <name type="common">Human</name>
    <dbReference type="NCBI Taxonomy" id="9606"/>
    <lineage>
        <taxon>Eukaryota</taxon>
        <taxon>Metazoa</taxon>
        <taxon>Chordata</taxon>
        <taxon>Craniata</taxon>
        <taxon>Vertebrata</taxon>
        <taxon>Euteleostomi</taxon>
        <taxon>Mammalia</taxon>
        <taxon>Eutheria</taxon>
        <taxon>Euarchontoglires</taxon>
        <taxon>Primates</taxon>
        <taxon>Haplorrhini</taxon>
        <taxon>Catarrhini</taxon>
        <taxon>Hominidae</taxon>
        <taxon>Homo</taxon>
    </lineage>
</organism>
<evidence type="ECO:0000255" key="1"/>
<evidence type="ECO:0000255" key="2">
    <source>
        <dbReference type="PROSITE-ProRule" id="PRU00521"/>
    </source>
</evidence>
<evidence type="ECO:0000305" key="3"/>
<name>OR2T4_HUMAN</name>
<feature type="chain" id="PRO_0000150499" description="Olfactory receptor 2T4">
    <location>
        <begin position="1"/>
        <end position="348"/>
    </location>
</feature>
<feature type="topological domain" description="Extracellular" evidence="1">
    <location>
        <begin position="1"/>
        <end position="57"/>
    </location>
</feature>
<feature type="transmembrane region" description="Helical; Name=1" evidence="1">
    <location>
        <begin position="58"/>
        <end position="81"/>
    </location>
</feature>
<feature type="topological domain" description="Cytoplasmic" evidence="1">
    <location>
        <begin position="82"/>
        <end position="89"/>
    </location>
</feature>
<feature type="transmembrane region" description="Helical; Name=2" evidence="1">
    <location>
        <begin position="90"/>
        <end position="111"/>
    </location>
</feature>
<feature type="topological domain" description="Extracellular" evidence="1">
    <location>
        <begin position="112"/>
        <end position="132"/>
    </location>
</feature>
<feature type="transmembrane region" description="Helical; Name=3" evidence="1">
    <location>
        <begin position="133"/>
        <end position="152"/>
    </location>
</feature>
<feature type="topological domain" description="Cytoplasmic" evidence="1">
    <location>
        <begin position="153"/>
        <end position="171"/>
    </location>
</feature>
<feature type="transmembrane region" description="Helical; Name=4" evidence="1">
    <location>
        <begin position="172"/>
        <end position="190"/>
    </location>
</feature>
<feature type="topological domain" description="Extracellular" evidence="1">
    <location>
        <begin position="191"/>
        <end position="227"/>
    </location>
</feature>
<feature type="transmembrane region" description="Helical; Name=5" evidence="1">
    <location>
        <begin position="228"/>
        <end position="251"/>
    </location>
</feature>
<feature type="topological domain" description="Cytoplasmic" evidence="1">
    <location>
        <begin position="252"/>
        <end position="268"/>
    </location>
</feature>
<feature type="transmembrane region" description="Helical; Name=6" evidence="1">
    <location>
        <begin position="269"/>
        <end position="291"/>
    </location>
</feature>
<feature type="topological domain" description="Extracellular" evidence="1">
    <location>
        <begin position="292"/>
        <end position="304"/>
    </location>
</feature>
<feature type="transmembrane region" description="Helical; Name=7" evidence="1">
    <location>
        <begin position="305"/>
        <end position="324"/>
    </location>
</feature>
<feature type="topological domain" description="Cytoplasmic" evidence="1">
    <location>
        <begin position="325"/>
        <end position="348"/>
    </location>
</feature>
<feature type="glycosylation site" description="N-linked (GlcNAc...) asparagine" evidence="1">
    <location>
        <position position="31"/>
    </location>
</feature>
<feature type="glycosylation site" description="N-linked (GlcNAc...) asparagine" evidence="1">
    <location>
        <position position="37"/>
    </location>
</feature>
<feature type="glycosylation site" description="N-linked (GlcNAc...) asparagine" evidence="1">
    <location>
        <position position="218"/>
    </location>
</feature>
<feature type="disulfide bond" evidence="2">
    <location>
        <begin position="129"/>
        <end position="221"/>
    </location>
</feature>
<feature type="sequence variant" id="VAR_062027" description="In dbSNP:rs57795102.">
    <original>N</original>
    <variation>S</variation>
    <location>
        <position position="31"/>
    </location>
</feature>
<sequence length="348" mass="39414">MDNITWMASHTGWSDFILMGLFRQSKHPMANITWMANHTGWSDFILLGLFRQSKHPALLCVVIFVVFLMALSGNAVLILLIHCDAHLHTPMYFFISQLSLMDMAYISVTVPKMLLDQVMGVNKISAPECGMQMFFYVTLAGSEFFLLATMAYDRYVAICHPLRYPVLMNHRVCLFLSSGCWFLGSVDGFTFTPITMTFPFRGSREIHHFFCEVPAVLNLSCSDTSLYEIFMYLCCVLMLLIPVVIISSSYLLILLTIHGMNSAEGRKKAFATCSSHLTVVILFYGAAIYTYMLPSSYHTPEKDMMVSVFYTILTPVVNPLIYSLRNKDVMGALKKMLTVEPAFQKAME</sequence>
<protein>
    <recommendedName>
        <fullName>Olfactory receptor 2T4</fullName>
    </recommendedName>
    <alternativeName>
        <fullName>Olfactory receptor OR1-60</fullName>
    </alternativeName>
</protein>
<reference key="1">
    <citation type="submission" date="2001-07" db="EMBL/GenBank/DDBJ databases">
        <title>Genome-wide discovery and analysis of human seven transmembrane helix receptor genes.</title>
        <authorList>
            <person name="Suwa M."/>
            <person name="Sato T."/>
            <person name="Okouchi I."/>
            <person name="Arita M."/>
            <person name="Futami K."/>
            <person name="Matsumoto S."/>
            <person name="Tsutsumi S."/>
            <person name="Aburatani H."/>
            <person name="Asai K."/>
            <person name="Akiyama Y."/>
        </authorList>
    </citation>
    <scope>NUCLEOTIDE SEQUENCE [GENOMIC DNA]</scope>
</reference>
<reference key="2">
    <citation type="journal article" date="2006" name="Nature">
        <title>The DNA sequence and biological annotation of human chromosome 1.</title>
        <authorList>
            <person name="Gregory S.G."/>
            <person name="Barlow K.F."/>
            <person name="McLay K.E."/>
            <person name="Kaul R."/>
            <person name="Swarbreck D."/>
            <person name="Dunham A."/>
            <person name="Scott C.E."/>
            <person name="Howe K.L."/>
            <person name="Woodfine K."/>
            <person name="Spencer C.C.A."/>
            <person name="Jones M.C."/>
            <person name="Gillson C."/>
            <person name="Searle S."/>
            <person name="Zhou Y."/>
            <person name="Kokocinski F."/>
            <person name="McDonald L."/>
            <person name="Evans R."/>
            <person name="Phillips K."/>
            <person name="Atkinson A."/>
            <person name="Cooper R."/>
            <person name="Jones C."/>
            <person name="Hall R.E."/>
            <person name="Andrews T.D."/>
            <person name="Lloyd C."/>
            <person name="Ainscough R."/>
            <person name="Almeida J.P."/>
            <person name="Ambrose K.D."/>
            <person name="Anderson F."/>
            <person name="Andrew R.W."/>
            <person name="Ashwell R.I.S."/>
            <person name="Aubin K."/>
            <person name="Babbage A.K."/>
            <person name="Bagguley C.L."/>
            <person name="Bailey J."/>
            <person name="Beasley H."/>
            <person name="Bethel G."/>
            <person name="Bird C.P."/>
            <person name="Bray-Allen S."/>
            <person name="Brown J.Y."/>
            <person name="Brown A.J."/>
            <person name="Buckley D."/>
            <person name="Burton J."/>
            <person name="Bye J."/>
            <person name="Carder C."/>
            <person name="Chapman J.C."/>
            <person name="Clark S.Y."/>
            <person name="Clarke G."/>
            <person name="Clee C."/>
            <person name="Cobley V."/>
            <person name="Collier R.E."/>
            <person name="Corby N."/>
            <person name="Coville G.J."/>
            <person name="Davies J."/>
            <person name="Deadman R."/>
            <person name="Dunn M."/>
            <person name="Earthrowl M."/>
            <person name="Ellington A.G."/>
            <person name="Errington H."/>
            <person name="Frankish A."/>
            <person name="Frankland J."/>
            <person name="French L."/>
            <person name="Garner P."/>
            <person name="Garnett J."/>
            <person name="Gay L."/>
            <person name="Ghori M.R.J."/>
            <person name="Gibson R."/>
            <person name="Gilby L.M."/>
            <person name="Gillett W."/>
            <person name="Glithero R.J."/>
            <person name="Grafham D.V."/>
            <person name="Griffiths C."/>
            <person name="Griffiths-Jones S."/>
            <person name="Grocock R."/>
            <person name="Hammond S."/>
            <person name="Harrison E.S.I."/>
            <person name="Hart E."/>
            <person name="Haugen E."/>
            <person name="Heath P.D."/>
            <person name="Holmes S."/>
            <person name="Holt K."/>
            <person name="Howden P.J."/>
            <person name="Hunt A.R."/>
            <person name="Hunt S.E."/>
            <person name="Hunter G."/>
            <person name="Isherwood J."/>
            <person name="James R."/>
            <person name="Johnson C."/>
            <person name="Johnson D."/>
            <person name="Joy A."/>
            <person name="Kay M."/>
            <person name="Kershaw J.K."/>
            <person name="Kibukawa M."/>
            <person name="Kimberley A.M."/>
            <person name="King A."/>
            <person name="Knights A.J."/>
            <person name="Lad H."/>
            <person name="Laird G."/>
            <person name="Lawlor S."/>
            <person name="Leongamornlert D.A."/>
            <person name="Lloyd D.M."/>
            <person name="Loveland J."/>
            <person name="Lovell J."/>
            <person name="Lush M.J."/>
            <person name="Lyne R."/>
            <person name="Martin S."/>
            <person name="Mashreghi-Mohammadi M."/>
            <person name="Matthews L."/>
            <person name="Matthews N.S.W."/>
            <person name="McLaren S."/>
            <person name="Milne S."/>
            <person name="Mistry S."/>
            <person name="Moore M.J.F."/>
            <person name="Nickerson T."/>
            <person name="O'Dell C.N."/>
            <person name="Oliver K."/>
            <person name="Palmeiri A."/>
            <person name="Palmer S.A."/>
            <person name="Parker A."/>
            <person name="Patel D."/>
            <person name="Pearce A.V."/>
            <person name="Peck A.I."/>
            <person name="Pelan S."/>
            <person name="Phelps K."/>
            <person name="Phillimore B.J."/>
            <person name="Plumb R."/>
            <person name="Rajan J."/>
            <person name="Raymond C."/>
            <person name="Rouse G."/>
            <person name="Saenphimmachak C."/>
            <person name="Sehra H.K."/>
            <person name="Sheridan E."/>
            <person name="Shownkeen R."/>
            <person name="Sims S."/>
            <person name="Skuce C.D."/>
            <person name="Smith M."/>
            <person name="Steward C."/>
            <person name="Subramanian S."/>
            <person name="Sycamore N."/>
            <person name="Tracey A."/>
            <person name="Tromans A."/>
            <person name="Van Helmond Z."/>
            <person name="Wall M."/>
            <person name="Wallis J.M."/>
            <person name="White S."/>
            <person name="Whitehead S.L."/>
            <person name="Wilkinson J.E."/>
            <person name="Willey D.L."/>
            <person name="Williams H."/>
            <person name="Wilming L."/>
            <person name="Wray P.W."/>
            <person name="Wu Z."/>
            <person name="Coulson A."/>
            <person name="Vaudin M."/>
            <person name="Sulston J.E."/>
            <person name="Durbin R.M."/>
            <person name="Hubbard T."/>
            <person name="Wooster R."/>
            <person name="Dunham I."/>
            <person name="Carter N.P."/>
            <person name="McVean G."/>
            <person name="Ross M.T."/>
            <person name="Harrow J."/>
            <person name="Olson M.V."/>
            <person name="Beck S."/>
            <person name="Rogers J."/>
            <person name="Bentley D.R."/>
        </authorList>
    </citation>
    <scope>NUCLEOTIDE SEQUENCE [LARGE SCALE GENOMIC DNA]</scope>
</reference>
<reference key="3">
    <citation type="journal article" date="2004" name="Proc. Natl. Acad. Sci. U.S.A.">
        <title>The human olfactory receptor gene family.</title>
        <authorList>
            <person name="Malnic B."/>
            <person name="Godfrey P.A."/>
            <person name="Buck L.B."/>
        </authorList>
    </citation>
    <scope>IDENTIFICATION</scope>
</reference>
<reference key="4">
    <citation type="journal article" date="2004" name="Proc. Natl. Acad. Sci. U.S.A.">
        <authorList>
            <person name="Malnic B."/>
            <person name="Godfrey P.A."/>
            <person name="Buck L.B."/>
        </authorList>
    </citation>
    <scope>ERRATUM OF PUBMED:14983052</scope>
</reference>
<keyword id="KW-1003">Cell membrane</keyword>
<keyword id="KW-1015">Disulfide bond</keyword>
<keyword id="KW-0297">G-protein coupled receptor</keyword>
<keyword id="KW-0325">Glycoprotein</keyword>
<keyword id="KW-0472">Membrane</keyword>
<keyword id="KW-0552">Olfaction</keyword>
<keyword id="KW-0675">Receptor</keyword>
<keyword id="KW-1185">Reference proteome</keyword>
<keyword id="KW-0716">Sensory transduction</keyword>
<keyword id="KW-0807">Transducer</keyword>
<keyword id="KW-0812">Transmembrane</keyword>
<keyword id="KW-1133">Transmembrane helix</keyword>